<proteinExistence type="evidence at protein level"/>
<evidence type="ECO:0000269" key="1">
    <source>
    </source>
</evidence>
<evidence type="ECO:0000305" key="2"/>
<evidence type="ECO:0007829" key="3">
    <source>
        <dbReference type="PDB" id="1CM9"/>
    </source>
</evidence>
<evidence type="ECO:0007829" key="4">
    <source>
        <dbReference type="PDB" id="1HFG"/>
    </source>
</evidence>
<evidence type="ECO:0007829" key="5">
    <source>
        <dbReference type="PDB" id="2FHT"/>
    </source>
</evidence>
<evidence type="ECO:0007829" key="6">
    <source>
        <dbReference type="PDB" id="4RWS"/>
    </source>
</evidence>
<reference key="1">
    <citation type="submission" date="1996-09" db="EMBL/GenBank/DDBJ databases">
        <title>Kaposi's sarcoma-associated human herpesvirus-8 encodes homologs of macrophage inflammatory protein-1 and interleukin-6.</title>
        <authorList>
            <person name="Nicholas J."/>
            <person name="Ruvolo V.R."/>
            <person name="Burns W.H."/>
            <person name="Sandford G."/>
            <person name="Wan X."/>
            <person name="Ciufo D."/>
            <person name="Hendrickson S."/>
            <person name="Guo H.G."/>
            <person name="Hayward G.S."/>
            <person name="Reitz M.S."/>
        </authorList>
    </citation>
    <scope>NUCLEOTIDE SEQUENCE [GENOMIC DNA]</scope>
</reference>
<reference key="2">
    <citation type="journal article" date="1996" name="Science">
        <title>Molecular mimicry of human cytokine and cytokine response pathway genes by KSHV.</title>
        <authorList>
            <person name="Moore P.S."/>
            <person name="Bashoff C."/>
            <person name="Weiss R.A."/>
            <person name="Chang Y."/>
        </authorList>
    </citation>
    <scope>NUCLEOTIDE SEQUENCE [GENOMIC DNA]</scope>
</reference>
<reference key="3">
    <citation type="journal article" date="1996" name="Proc. Natl. Acad. Sci. U.S.A.">
        <title>Nucleotide sequence of the Kaposi sarcoma-associated herpesvirus (HHV8).</title>
        <authorList>
            <person name="Russo J.J."/>
            <person name="Bohenzky R.A."/>
            <person name="Chien M.-C."/>
            <person name="Chen J."/>
            <person name="Yan M."/>
            <person name="Maddalena D."/>
            <person name="Parry J.P."/>
            <person name="Peruzzi D."/>
            <person name="Edelman I.S."/>
            <person name="Chang Y."/>
            <person name="Moore P.S."/>
        </authorList>
    </citation>
    <scope>NUCLEOTIDE SEQUENCE [GENOMIC DNA]</scope>
</reference>
<reference key="4">
    <citation type="submission" date="1996-09" db="EMBL/GenBank/DDBJ databases">
        <authorList>
            <person name="Sun R."/>
            <person name="Lin S.-F."/>
            <person name="Miller G."/>
        </authorList>
    </citation>
    <scope>NUCLEOTIDE SEQUENCE [GENOMIC DNA]</scope>
</reference>
<reference key="5">
    <citation type="journal article" date="2006" name="J. Gen. Virol.">
        <title>Kaposi's sarcoma-associated herpesvirus immune modulation: an overview.</title>
        <authorList>
            <person name="Rezaee S.A.R."/>
            <person name="Cunningham C."/>
            <person name="Davison A.J."/>
            <person name="Blackbourn D.J."/>
        </authorList>
    </citation>
    <scope>NUCLEOTIDE SEQUENCE [LARGE SCALE GENOMIC DNA]</scope>
</reference>
<reference key="6">
    <citation type="journal article" date="2000" name="Biochemistry">
        <title>Comparison of the structure of vMIP-II with eotaxin-1, RANTES, and MCP-3 suggests a unique mechanism for CCR3 activation.</title>
        <authorList>
            <person name="Fernandez E.J."/>
            <person name="Wilken J."/>
            <person name="Thompson D.A."/>
            <person name="Peiper S.C."/>
            <person name="Lolis E."/>
        </authorList>
    </citation>
    <scope>X-RAY CRYSTALLOGRAPHY (2.1 ANGSTROMS)</scope>
</reference>
<reference key="7">
    <citation type="journal article" date="1999" name="Protein Sci.">
        <title>The solution structure of the anti-HIV chemokine vMIP-II.</title>
        <authorList>
            <person name="Liwang A.C."/>
            <person name="Wang Z.-X."/>
            <person name="Sun Y."/>
            <person name="Peiper S.C."/>
            <person name="Liwang P.J."/>
        </authorList>
    </citation>
    <scope>STRUCTURE BY NMR</scope>
</reference>
<reference key="8">
    <citation type="journal article" date="2015" name="Science">
        <title>Structural biology. Crystal structure of the chemokine receptor CXCR4 in complex with a viral chemokine.</title>
        <authorList>
            <person name="Qin L."/>
            <person name="Kufareva I."/>
            <person name="Holden L.G."/>
            <person name="Wang C."/>
            <person name="Zheng Y."/>
            <person name="Zhao C."/>
            <person name="Fenalti G."/>
            <person name="Wu H."/>
            <person name="Han G.W."/>
            <person name="Cherezov V."/>
            <person name="Abagyan R."/>
            <person name="Stevens R.C."/>
            <person name="Handel T.M."/>
        </authorList>
    </citation>
    <scope>X-RAY CRYSTALLOGRAPHY (3.10 ANGSTROMS) OF 24-94 IN COMPLEX WITH HUMAN CXCR4</scope>
    <scope>INTERACTION WITH HOST CXCR4</scope>
</reference>
<organism>
    <name type="scientific">Human herpesvirus 8 type P (isolate GK18)</name>
    <name type="common">HHV-8</name>
    <name type="synonym">Kaposi's sarcoma-associated herpesvirus</name>
    <dbReference type="NCBI Taxonomy" id="868565"/>
    <lineage>
        <taxon>Viruses</taxon>
        <taxon>Duplodnaviria</taxon>
        <taxon>Heunggongvirae</taxon>
        <taxon>Peploviricota</taxon>
        <taxon>Herviviricetes</taxon>
        <taxon>Herpesvirales</taxon>
        <taxon>Orthoherpesviridae</taxon>
        <taxon>Gammaherpesvirinae</taxon>
        <taxon>Rhadinovirus</taxon>
        <taxon>Rhadinovirus humangamma8</taxon>
        <taxon>Human herpesvirus 8</taxon>
    </lineage>
</organism>
<organismHost>
    <name type="scientific">Homo sapiens</name>
    <name type="common">Human</name>
    <dbReference type="NCBI Taxonomy" id="9606"/>
</organismHost>
<protein>
    <recommendedName>
        <fullName>Viral macrophage inflammatory protein 2</fullName>
    </recommendedName>
    <alternativeName>
        <fullName>Viral macrophage inflammatory protein II</fullName>
        <shortName>vMIP-II</shortName>
    </alternativeName>
    <alternativeName>
        <fullName>vMIP-1B</fullName>
    </alternativeName>
</protein>
<accession>Q98157</accession>
<accession>D0UZM1</accession>
<accession>Q2HRC3</accession>
<keyword id="KW-0002">3D-structure</keyword>
<keyword id="KW-0202">Cytokine</keyword>
<keyword id="KW-1015">Disulfide bond</keyword>
<keyword id="KW-1185">Reference proteome</keyword>
<keyword id="KW-0964">Secreted</keyword>
<keyword id="KW-0732">Signal</keyword>
<sequence>MDTKGILLVAVLTALLCLQSGDTLGASWHRPDKCCLGYQKRPLPQVLLSSWYPTSQLCSKPGVIFLTKRGRQVCADKSKDWVKKLMQQLPVTAR</sequence>
<name>VMI2_HHV8P</name>
<dbReference type="EMBL" id="U67775">
    <property type="protein sequence ID" value="AAB61702.1"/>
    <property type="molecule type" value="Genomic_DNA"/>
</dbReference>
<dbReference type="EMBL" id="U75698">
    <property type="protein sequence ID" value="AAC57093.1"/>
    <property type="molecule type" value="Genomic_DNA"/>
</dbReference>
<dbReference type="EMBL" id="U93872">
    <property type="protein sequence ID" value="AAB62642.1"/>
    <property type="molecule type" value="Genomic_DNA"/>
</dbReference>
<dbReference type="EMBL" id="U71365">
    <property type="protein sequence ID" value="AAC34941.1"/>
    <property type="molecule type" value="Genomic_DNA"/>
</dbReference>
<dbReference type="EMBL" id="AF148805">
    <property type="protein sequence ID" value="ABD28861.1"/>
    <property type="molecule type" value="Genomic_DNA"/>
</dbReference>
<dbReference type="PDB" id="1CM9">
    <property type="method" value="X-ray"/>
    <property type="resolution" value="2.10 A"/>
    <property type="chains" value="A/B=21-94"/>
</dbReference>
<dbReference type="PDB" id="1HFF">
    <property type="method" value="NMR"/>
    <property type="chains" value="A=24-33"/>
</dbReference>
<dbReference type="PDB" id="1HFG">
    <property type="method" value="NMR"/>
    <property type="chains" value="A=24-94"/>
</dbReference>
<dbReference type="PDB" id="1HFN">
    <property type="method" value="NMR"/>
    <property type="chains" value="A=24-94"/>
</dbReference>
<dbReference type="PDB" id="1HHV">
    <property type="method" value="NMR"/>
    <property type="chains" value="A=21-94"/>
</dbReference>
<dbReference type="PDB" id="1VMP">
    <property type="method" value="NMR"/>
    <property type="chains" value="A=24-94"/>
</dbReference>
<dbReference type="PDB" id="2FHT">
    <property type="method" value="X-ray"/>
    <property type="resolution" value="1.70 A"/>
    <property type="chains" value="A=24-94"/>
</dbReference>
<dbReference type="PDB" id="2FJ2">
    <property type="method" value="X-ray"/>
    <property type="resolution" value="2.30 A"/>
    <property type="chains" value="A/B/C/D=24-94"/>
</dbReference>
<dbReference type="PDB" id="4RWS">
    <property type="method" value="X-ray"/>
    <property type="resolution" value="3.10 A"/>
    <property type="chains" value="C=24-94"/>
</dbReference>
<dbReference type="PDBsum" id="1CM9"/>
<dbReference type="PDBsum" id="1HFF"/>
<dbReference type="PDBsum" id="1HFG"/>
<dbReference type="PDBsum" id="1HFN"/>
<dbReference type="PDBsum" id="1HHV"/>
<dbReference type="PDBsum" id="1VMP"/>
<dbReference type="PDBsum" id="2FHT"/>
<dbReference type="PDBsum" id="2FJ2"/>
<dbReference type="PDBsum" id="4RWS"/>
<dbReference type="BMRB" id="Q98157"/>
<dbReference type="SMR" id="Q98157"/>
<dbReference type="BioGRID" id="1777017">
    <property type="interactions" value="5"/>
</dbReference>
<dbReference type="DNASU" id="4961514"/>
<dbReference type="KEGG" id="vg:4961514"/>
<dbReference type="EvolutionaryTrace" id="Q98157"/>
<dbReference type="Proteomes" id="UP000000942">
    <property type="component" value="Segment"/>
</dbReference>
<dbReference type="GO" id="GO:0005615">
    <property type="term" value="C:extracellular space"/>
    <property type="evidence" value="ECO:0007669"/>
    <property type="project" value="UniProtKB-KW"/>
</dbReference>
<dbReference type="GO" id="GO:0032991">
    <property type="term" value="C:protein-containing complex"/>
    <property type="evidence" value="ECO:0000314"/>
    <property type="project" value="CAFA"/>
</dbReference>
<dbReference type="GO" id="GO:0008009">
    <property type="term" value="F:chemokine activity"/>
    <property type="evidence" value="ECO:0007669"/>
    <property type="project" value="InterPro"/>
</dbReference>
<dbReference type="GO" id="GO:0045236">
    <property type="term" value="F:CXCR chemokine receptor binding"/>
    <property type="evidence" value="ECO:0000353"/>
    <property type="project" value="CAFA"/>
</dbReference>
<dbReference type="GO" id="GO:0006955">
    <property type="term" value="P:immune response"/>
    <property type="evidence" value="ECO:0007669"/>
    <property type="project" value="InterPro"/>
</dbReference>
<dbReference type="CDD" id="cd00272">
    <property type="entry name" value="Chemokine_CC"/>
    <property type="match status" value="1"/>
</dbReference>
<dbReference type="FunFam" id="2.40.50.40:FF:000002">
    <property type="entry name" value="C-C motif chemokine"/>
    <property type="match status" value="1"/>
</dbReference>
<dbReference type="Gene3D" id="2.40.50.40">
    <property type="match status" value="1"/>
</dbReference>
<dbReference type="InterPro" id="IPR039809">
    <property type="entry name" value="Chemokine_b/g/d"/>
</dbReference>
<dbReference type="InterPro" id="IPR000827">
    <property type="entry name" value="Chemokine_CC_CS"/>
</dbReference>
<dbReference type="InterPro" id="IPR001811">
    <property type="entry name" value="Chemokine_IL8-like_dom"/>
</dbReference>
<dbReference type="InterPro" id="IPR036048">
    <property type="entry name" value="Interleukin_8-like_sf"/>
</dbReference>
<dbReference type="PANTHER" id="PTHR12015:SF183">
    <property type="entry name" value="C-C MOTIF CHEMOKINE 3"/>
    <property type="match status" value="1"/>
</dbReference>
<dbReference type="PANTHER" id="PTHR12015">
    <property type="entry name" value="SMALL INDUCIBLE CYTOKINE A"/>
    <property type="match status" value="1"/>
</dbReference>
<dbReference type="Pfam" id="PF00048">
    <property type="entry name" value="IL8"/>
    <property type="match status" value="1"/>
</dbReference>
<dbReference type="SMART" id="SM00199">
    <property type="entry name" value="SCY"/>
    <property type="match status" value="1"/>
</dbReference>
<dbReference type="SUPFAM" id="SSF54117">
    <property type="entry name" value="Interleukin 8-like chemokines"/>
    <property type="match status" value="1"/>
</dbReference>
<dbReference type="PROSITE" id="PS00472">
    <property type="entry name" value="SMALL_CYTOKINES_CC"/>
    <property type="match status" value="1"/>
</dbReference>
<gene>
    <name type="primary">ORF K4</name>
</gene>
<comment type="function">
    <text>Blocks infection by several different human immunodeficiency virus type 1 (HIV-1) strains. This occurs because vMIP-II binds to a wide range of chemokine receptors. May form part of the response to host defenses contributing to virus-induced neoplasia and may have relevance to KSHV and HIV-I interactions.</text>
</comment>
<comment type="subunit">
    <text evidence="1">Monomer. Interacts with human chemokine receptor CXCR4 (PubMed:25612609).</text>
</comment>
<comment type="subcellular location">
    <subcellularLocation>
        <location>Secreted</location>
    </subcellularLocation>
</comment>
<comment type="similarity">
    <text evidence="2">Belongs to the intercrine beta (chemokine CC) family.</text>
</comment>
<feature type="signal peptide">
    <location>
        <begin position="1"/>
        <end position="20"/>
    </location>
</feature>
<feature type="chain" id="PRO_0000005245" description="Viral macrophage inflammatory protein 2">
    <location>
        <begin position="21"/>
        <end position="94"/>
    </location>
</feature>
<feature type="disulfide bond">
    <location>
        <begin position="34"/>
        <end position="58"/>
    </location>
</feature>
<feature type="disulfide bond">
    <location>
        <begin position="35"/>
        <end position="74"/>
    </location>
</feature>
<feature type="turn" evidence="6">
    <location>
        <begin position="25"/>
        <end position="29"/>
    </location>
</feature>
<feature type="strand" evidence="3">
    <location>
        <begin position="32"/>
        <end position="34"/>
    </location>
</feature>
<feature type="helix" evidence="5">
    <location>
        <begin position="45"/>
        <end position="47"/>
    </location>
</feature>
<feature type="strand" evidence="5">
    <location>
        <begin position="48"/>
        <end position="53"/>
    </location>
</feature>
<feature type="strand" evidence="5">
    <location>
        <begin position="58"/>
        <end position="60"/>
    </location>
</feature>
<feature type="strand" evidence="5">
    <location>
        <begin position="62"/>
        <end position="67"/>
    </location>
</feature>
<feature type="strand" evidence="4">
    <location>
        <begin position="68"/>
        <end position="70"/>
    </location>
</feature>
<feature type="strand" evidence="5">
    <location>
        <begin position="72"/>
        <end position="76"/>
    </location>
</feature>
<feature type="helix" evidence="5">
    <location>
        <begin position="80"/>
        <end position="88"/>
    </location>
</feature>